<comment type="function">
    <text>Required for genome encapsidation. Forms ribonucleoprotein complexes along with TGB1 helicase and viral RNA.</text>
</comment>
<comment type="subcellular location">
    <subcellularLocation>
        <location evidence="2">Virion</location>
    </subcellularLocation>
</comment>
<comment type="similarity">
    <text evidence="2">Belongs to the potexviruses coat protein family.</text>
</comment>
<name>CAPSD_LSV</name>
<dbReference type="EMBL" id="X15343">
    <property type="protein sequence ID" value="CAA33401.1"/>
    <property type="molecule type" value="Genomic_RNA"/>
</dbReference>
<dbReference type="SMR" id="P27335"/>
<dbReference type="GO" id="GO:0019029">
    <property type="term" value="C:helical viral capsid"/>
    <property type="evidence" value="ECO:0007669"/>
    <property type="project" value="UniProtKB-KW"/>
</dbReference>
<dbReference type="GO" id="GO:1990904">
    <property type="term" value="C:ribonucleoprotein complex"/>
    <property type="evidence" value="ECO:0007669"/>
    <property type="project" value="UniProtKB-KW"/>
</dbReference>
<dbReference type="GO" id="GO:0005198">
    <property type="term" value="F:structural molecule activity"/>
    <property type="evidence" value="ECO:0007669"/>
    <property type="project" value="InterPro"/>
</dbReference>
<dbReference type="InterPro" id="IPR013569">
    <property type="entry name" value="Carlavirus_coat_N"/>
</dbReference>
<dbReference type="InterPro" id="IPR000052">
    <property type="entry name" value="Pltvir_coat"/>
</dbReference>
<dbReference type="Pfam" id="PF00286">
    <property type="entry name" value="Flexi_CP"/>
    <property type="match status" value="1"/>
</dbReference>
<dbReference type="Pfam" id="PF08358">
    <property type="entry name" value="Flexi_CP_N"/>
    <property type="match status" value="1"/>
</dbReference>
<dbReference type="PRINTS" id="PR00232">
    <property type="entry name" value="POTXCARLCOAT"/>
</dbReference>
<dbReference type="PROSITE" id="PS00418">
    <property type="entry name" value="POTEX_CARLAVIRUS_COAT"/>
    <property type="match status" value="1"/>
</dbReference>
<organism>
    <name type="scientific">Lily symptomless virus</name>
    <name type="common">LSV</name>
    <dbReference type="NCBI Taxonomy" id="12173"/>
    <lineage>
        <taxon>Viruses</taxon>
        <taxon>Riboviria</taxon>
        <taxon>Orthornavirae</taxon>
        <taxon>Kitrinoviricota</taxon>
        <taxon>Alsuviricetes</taxon>
        <taxon>Tymovirales</taxon>
        <taxon>Betaflexiviridae</taxon>
        <taxon>Quinvirinae</taxon>
        <taxon>Carlavirus</taxon>
    </lineage>
</organism>
<proteinExistence type="inferred from homology"/>
<organismHost>
    <name type="scientific">Lilium</name>
    <dbReference type="NCBI Taxonomy" id="4688"/>
</organismHost>
<keyword id="KW-0167">Capsid protein</keyword>
<keyword id="KW-1139">Helical capsid protein</keyword>
<keyword id="KW-0687">Ribonucleoprotein</keyword>
<keyword id="KW-0946">Virion</keyword>
<sequence length="291" mass="32041">MQSRPAQESGSASETPARGRPTPSDAPRDEPTNYNNNAESLLEQRLTRLIEKLNAEKHNSNLRNVAFEIGRPSLEPTSAMRRNPANPYGRFSIDELFKMKVGVVSNNMATTEQMAKIASDIAGLGVPTEHVASVILQMVIMCACVSSSAFLDPEGSIEFENGAVPVDSIAAIMKKHAGLRKVCRLYAPIVWNSMLVRNQPPADWQAMGFQYNTRFAAFDTFDYVTNQAAIQPVEGIIRRPTSAEVIAHNAHKQLALDRSNRNERLGSLETEYTGGVQGAEIVRNHRYANNG</sequence>
<feature type="chain" id="PRO_0000222638" description="Capsid protein">
    <location>
        <begin position="1"/>
        <end position="291"/>
    </location>
</feature>
<feature type="region of interest" description="Disordered" evidence="1">
    <location>
        <begin position="1"/>
        <end position="36"/>
    </location>
</feature>
<feature type="compositionally biased region" description="Polar residues" evidence="1">
    <location>
        <begin position="1"/>
        <end position="14"/>
    </location>
</feature>
<evidence type="ECO:0000256" key="1">
    <source>
        <dbReference type="SAM" id="MobiDB-lite"/>
    </source>
</evidence>
<evidence type="ECO:0000305" key="2"/>
<protein>
    <recommendedName>
        <fullName>Capsid protein</fullName>
    </recommendedName>
    <alternativeName>
        <fullName>Coat protein</fullName>
        <shortName>CP</shortName>
    </alternativeName>
</protein>
<reference key="1">
    <citation type="journal article" date="1990" name="J. Gen. Virol.">
        <title>Homologies between the genomes of a carlavirus (lily symptomless virus) and a potexvirus (lily virus X) from lily plants.</title>
        <authorList>
            <person name="Memelink J."/>
            <person name="van der Vlugt C.I.M."/>
            <person name="Linthorst H.J.M."/>
            <person name="Derks A.F.L.M."/>
            <person name="Asjes C.J."/>
            <person name="Bol J.F."/>
        </authorList>
    </citation>
    <scope>NUCLEOTIDE SEQUENCE [GENOMIC RNA]</scope>
</reference>
<reference key="2">
    <citation type="journal article" date="2005" name="Mol. Plant Microbe Interact.">
        <title>A new cell-to-cell transport model for Potexviruses.</title>
        <authorList>
            <person name="Verchot-Lubicz J."/>
        </authorList>
    </citation>
    <scope>REVIEW</scope>
</reference>
<accession>P27335</accession>